<dbReference type="EMBL" id="X04710">
    <property type="protein sequence ID" value="CAA28415.1"/>
    <property type="molecule type" value="Genomic_DNA"/>
</dbReference>
<dbReference type="EMBL" id="X15225">
    <property type="status" value="NOT_ANNOTATED_CDS"/>
    <property type="molecule type" value="Genomic_DNA"/>
</dbReference>
<dbReference type="EMBL" id="X54749">
    <property type="protein sequence ID" value="CAA38544.1"/>
    <property type="molecule type" value="Genomic_DNA"/>
</dbReference>
<dbReference type="EMBL" id="X54751">
    <property type="protein sequence ID" value="CAA38550.1"/>
    <property type="molecule type" value="Genomic_DNA"/>
</dbReference>
<dbReference type="EMBL" id="AB042240">
    <property type="protein sequence ID" value="BAB47062.1"/>
    <property type="molecule type" value="Genomic_DNA"/>
</dbReference>
<dbReference type="PIR" id="S14143">
    <property type="entry name" value="F2WTH"/>
</dbReference>
<dbReference type="RefSeq" id="NP_114286.1">
    <property type="nucleotide sequence ID" value="NC_002762.1"/>
</dbReference>
<dbReference type="SMR" id="P69555"/>
<dbReference type="STRING" id="4565.P69555"/>
<dbReference type="PaxDb" id="4565-EPlTAEP00000010067"/>
<dbReference type="EnsemblPlants" id="TraesARI2A03G00780880.1">
    <property type="protein sequence ID" value="TraesARI2A03G00780880.1.CDS1"/>
    <property type="gene ID" value="TraesARI2A03G00780880"/>
</dbReference>
<dbReference type="EnsemblPlants" id="TraesARIUn03G04718370.1">
    <property type="protein sequence ID" value="TraesARIUn03G04718370.1.CDS1"/>
    <property type="gene ID" value="TraesARIUn03G04718370"/>
</dbReference>
<dbReference type="EnsemblPlants" id="TraesARIUn03G04721400.1">
    <property type="protein sequence ID" value="TraesARIUn03G04721400.1.CDS1"/>
    <property type="gene ID" value="TraesARIUn03G04721400"/>
</dbReference>
<dbReference type="EnsemblPlants" id="TraesARIUn03G04723960.1">
    <property type="protein sequence ID" value="TraesARIUn03G04723960.1.CDS1"/>
    <property type="gene ID" value="TraesARIUn03G04723960"/>
</dbReference>
<dbReference type="EnsemblPlants" id="TraesARIUn03G04730880.1">
    <property type="protein sequence ID" value="TraesARIUn03G04730880.1.CDS1"/>
    <property type="gene ID" value="TraesARIUn03G04730880"/>
</dbReference>
<dbReference type="EnsemblPlants" id="TraesARIUn03G04730950.1">
    <property type="protein sequence ID" value="TraesARIUn03G04730950.1.CDS1"/>
    <property type="gene ID" value="TraesARIUn03G04730950"/>
</dbReference>
<dbReference type="EnsemblPlants" id="TraesARIUn03G04732690.1">
    <property type="protein sequence ID" value="TraesARIUn03G04732690.1.CDS1"/>
    <property type="gene ID" value="TraesARIUn03G04732690"/>
</dbReference>
<dbReference type="EnsemblPlants" id="TraesARIUn03G04734720.1">
    <property type="protein sequence ID" value="TraesARIUn03G04734720.1.CDS1"/>
    <property type="gene ID" value="TraesARIUn03G04734720"/>
</dbReference>
<dbReference type="EnsemblPlants" id="TraesCS5D03G1229900.1">
    <property type="protein sequence ID" value="TraesCS5D03G1229900.1.CDS1"/>
    <property type="gene ID" value="TraesCS5D03G1229900"/>
</dbReference>
<dbReference type="EnsemblPlants" id="TraesCSU02G269100.1">
    <property type="protein sequence ID" value="TraesCSU02G269100.1.cds1"/>
    <property type="gene ID" value="TraesCSU02G269100"/>
</dbReference>
<dbReference type="EnsemblPlants" id="TraesCSU03G0538600.1">
    <property type="protein sequence ID" value="TraesCSU03G0538600.1.CDS1"/>
    <property type="gene ID" value="TraesCSU03G0538600"/>
</dbReference>
<dbReference type="EnsemblPlants" id="TraesJAG7B03G04250220.1">
    <property type="protein sequence ID" value="TraesJAG7B03G04250220.1.CDS1"/>
    <property type="gene ID" value="TraesJAG7B03G04250220"/>
</dbReference>
<dbReference type="EnsemblPlants" id="TraesKAR4B01G0208980.1">
    <property type="protein sequence ID" value="cds.TraesKAR4B01G0208980.1"/>
    <property type="gene ID" value="TraesKAR4B01G0208980"/>
</dbReference>
<dbReference type="EnsemblPlants" id="TraesKAR6B01G0219380.1">
    <property type="protein sequence ID" value="cds.TraesKAR6B01G0219380.1"/>
    <property type="gene ID" value="TraesKAR6B01G0219380"/>
</dbReference>
<dbReference type="EnsemblPlants" id="TraesKAR6B01G0220160.1">
    <property type="protein sequence ID" value="cds.TraesKAR6B01G0220160.1"/>
    <property type="gene ID" value="TraesKAR6B01G0220160"/>
</dbReference>
<dbReference type="EnsemblPlants" id="TraesKARUn01G0028520.1">
    <property type="protein sequence ID" value="cds.TraesKARUn01G0028520.1"/>
    <property type="gene ID" value="TraesKARUn01G0028520"/>
</dbReference>
<dbReference type="EnsemblPlants" id="TraesKARUn01G0030090.1">
    <property type="protein sequence ID" value="cds.TraesKARUn01G0030090.1"/>
    <property type="gene ID" value="TraesKARUn01G0030090"/>
</dbReference>
<dbReference type="EnsemblPlants" id="TraesKARUn01G0066650.1">
    <property type="protein sequence ID" value="cds.TraesKARUn01G0066650.1"/>
    <property type="gene ID" value="TraesKARUn01G0066650"/>
</dbReference>
<dbReference type="EnsemblPlants" id="TraesKARUn01G0071160.1">
    <property type="protein sequence ID" value="cds.TraesKARUn01G0071160.1"/>
    <property type="gene ID" value="TraesKARUn01G0071160"/>
</dbReference>
<dbReference type="EnsemblPlants" id="TraesKARUn01G0071380.1">
    <property type="protein sequence ID" value="cds.TraesKARUn01G0071380.1"/>
    <property type="gene ID" value="TraesKARUn01G0071380"/>
</dbReference>
<dbReference type="EnsemblPlants" id="TraesKARUn01G0082260.1">
    <property type="protein sequence ID" value="cds.TraesKARUn01G0082260.1"/>
    <property type="gene ID" value="TraesKARUn01G0082260"/>
</dbReference>
<dbReference type="EnsemblPlants" id="TraesKARUn01G0082290.1">
    <property type="protein sequence ID" value="cds.TraesKARUn01G0082290.1"/>
    <property type="gene ID" value="TraesKARUn01G0082290"/>
</dbReference>
<dbReference type="EnsemblPlants" id="TraesKARUn01G0082440.1">
    <property type="protein sequence ID" value="cds.TraesKARUn01G0082440.1"/>
    <property type="gene ID" value="TraesKARUn01G0082440"/>
</dbReference>
<dbReference type="EnsemblPlants" id="TraesKARUn01G0086010.1">
    <property type="protein sequence ID" value="cds.TraesKARUn01G0086010.1"/>
    <property type="gene ID" value="TraesKARUn01G0086010"/>
</dbReference>
<dbReference type="EnsemblPlants" id="TraesKARUn01G0090890.1">
    <property type="protein sequence ID" value="cds.TraesKARUn01G0090890.1"/>
    <property type="gene ID" value="TraesKARUn01G0090890"/>
</dbReference>
<dbReference type="EnsemblPlants" id="TraesKARUn01G0091510.1">
    <property type="protein sequence ID" value="cds.TraesKARUn01G0091510.1"/>
    <property type="gene ID" value="TraesKARUn01G0091510"/>
</dbReference>
<dbReference type="EnsemblPlants" id="TraesKARUn01G0092050.1">
    <property type="protein sequence ID" value="cds.TraesKARUn01G0092050.1"/>
    <property type="gene ID" value="TraesKARUn01G0092050"/>
</dbReference>
<dbReference type="EnsemblPlants" id="TraesKARUn01G0092190.1">
    <property type="protein sequence ID" value="cds.TraesKARUn01G0092190.1"/>
    <property type="gene ID" value="TraesKARUn01G0092190"/>
</dbReference>
<dbReference type="EnsemblPlants" id="TraesKARUn01G0092240.1">
    <property type="protein sequence ID" value="cds.TraesKARUn01G0092240.1"/>
    <property type="gene ID" value="TraesKARUn01G0092240"/>
</dbReference>
<dbReference type="EnsemblPlants" id="TraesKARUn01G0092740.1">
    <property type="protein sequence ID" value="cds.TraesKARUn01G0092740.1"/>
    <property type="gene ID" value="TraesKARUn01G0092740"/>
</dbReference>
<dbReference type="EnsemblPlants" id="TraesKARUn01G0092980.1">
    <property type="protein sequence ID" value="cds.TraesKARUn01G0092980.1"/>
    <property type="gene ID" value="TraesKARUn01G0092980"/>
</dbReference>
<dbReference type="EnsemblPlants" id="TraesKARUn01G0127090.1">
    <property type="protein sequence ID" value="cds.TraesKARUn01G0127090.1"/>
    <property type="gene ID" value="TraesKARUn01G0127090"/>
</dbReference>
<dbReference type="EnsemblPlants" id="TraesKARUn01G0127420.1">
    <property type="protein sequence ID" value="cds.TraesKARUn01G0127420.1"/>
    <property type="gene ID" value="TraesKARUn01G0127420"/>
</dbReference>
<dbReference type="EnsemblPlants" id="TraesKARUn01G0127500.1">
    <property type="protein sequence ID" value="cds.TraesKARUn01G0127500.1"/>
    <property type="gene ID" value="TraesKARUn01G0127500"/>
</dbReference>
<dbReference type="EnsemblPlants" id="TraesKARUn01G0138270.1">
    <property type="protein sequence ID" value="cds.TraesKARUn01G0138270.1"/>
    <property type="gene ID" value="TraesKARUn01G0138270"/>
</dbReference>
<dbReference type="EnsemblPlants" id="TraesKARUn01G0140340.1">
    <property type="protein sequence ID" value="cds.TraesKARUn01G0140340.1"/>
    <property type="gene ID" value="TraesKARUn01G0140340"/>
</dbReference>
<dbReference type="EnsemblPlants" id="TraesKARUn01G0160390.1">
    <property type="protein sequence ID" value="cds.TraesKARUn01G0160390.1"/>
    <property type="gene ID" value="TraesKARUn01G0160390"/>
</dbReference>
<dbReference type="EnsemblPlants" id="TraesKARUn01G0178620.1">
    <property type="protein sequence ID" value="cds.TraesKARUn01G0178620.1"/>
    <property type="gene ID" value="TraesKARUn01G0178620"/>
</dbReference>
<dbReference type="EnsemblPlants" id="TraesKARUn01G0184460.1">
    <property type="protein sequence ID" value="cds.TraesKARUn01G0184460.1"/>
    <property type="gene ID" value="TraesKARUn01G0184460"/>
</dbReference>
<dbReference type="EnsemblPlants" id="TraesKARUn01G0186480.1">
    <property type="protein sequence ID" value="cds.TraesKARUn01G0186480.1"/>
    <property type="gene ID" value="TraesKARUn01G0186480"/>
</dbReference>
<dbReference type="EnsemblPlants" id="TraesLAC3B03G01549730.1">
    <property type="protein sequence ID" value="TraesLAC3B03G01549730.1.CDS1"/>
    <property type="gene ID" value="TraesLAC3B03G01549730"/>
</dbReference>
<dbReference type="EnsemblPlants" id="TraesLDM3B03G01608350.1">
    <property type="protein sequence ID" value="TraesLDM3B03G01608350.1.CDS1"/>
    <property type="gene ID" value="TraesLDM3B03G01608350"/>
</dbReference>
<dbReference type="EnsemblPlants" id="TraesNOR7B03G04316250.1">
    <property type="protein sequence ID" value="TraesNOR7B03G04316250.1.CDS1"/>
    <property type="gene ID" value="TraesNOR7B03G04316250"/>
</dbReference>
<dbReference type="EnsemblPlants" id="TraesNORUn03G04570620.1">
    <property type="protein sequence ID" value="TraesNORUn03G04570620.1.CDS1"/>
    <property type="gene ID" value="TraesNORUn03G04570620"/>
</dbReference>
<dbReference type="EnsemblPlants" id="TraesPARA_EIv1.0_2680750.1">
    <property type="protein sequence ID" value="TraesPARA_EIv1.0_2680750.1.CDS1"/>
    <property type="gene ID" value="TraesPARA_EIv1.0_2680750"/>
</dbReference>
<dbReference type="EnsemblPlants" id="TraesPARA_EIv1.0_2682000.1">
    <property type="protein sequence ID" value="TraesPARA_EIv1.0_2682000.1.CDS1"/>
    <property type="gene ID" value="TraesPARA_EIv1.0_2682000"/>
</dbReference>
<dbReference type="EnsemblPlants" id="TraesRN1A0100363600.1">
    <property type="protein sequence ID" value="TraesRN1A0100363600.1"/>
    <property type="gene ID" value="TraesRN1A0100363600"/>
</dbReference>
<dbReference type="EnsemblPlants" id="TraesRN1A0100363700.1">
    <property type="protein sequence ID" value="TraesRN1A0100363700.1"/>
    <property type="gene ID" value="TraesRN1A0100363700"/>
</dbReference>
<dbReference type="EnsemblPlants" id="TraesRN1A0100363800.1">
    <property type="protein sequence ID" value="TraesRN1A0100363800.1"/>
    <property type="gene ID" value="TraesRN1A0100363800"/>
</dbReference>
<dbReference type="EnsemblPlants" id="TraesRN3B0100439100.1">
    <property type="protein sequence ID" value="TraesRN3B0100439100.1"/>
    <property type="gene ID" value="TraesRN3B0100439100"/>
</dbReference>
<dbReference type="EnsemblPlants" id="TraesRN3D0100058700.1">
    <property type="protein sequence ID" value="TraesRN3D0100058700.1"/>
    <property type="gene ID" value="TraesRN3D0100058700"/>
</dbReference>
<dbReference type="EnsemblPlants" id="TraesRN4D0100078600.1">
    <property type="protein sequence ID" value="TraesRN4D0100078600.1"/>
    <property type="gene ID" value="TraesRN4D0100078600"/>
</dbReference>
<dbReference type="EnsemblPlants" id="TraesRN7D0100633100.1">
    <property type="protein sequence ID" value="TraesRN7D0100633100.1"/>
    <property type="gene ID" value="TraesRN7D0100633100"/>
</dbReference>
<dbReference type="EnsemblPlants" id="TraesSYM2A03G00780580.1">
    <property type="protein sequence ID" value="TraesSYM2A03G00780580.1.CDS1"/>
    <property type="gene ID" value="TraesSYM2A03G00780580"/>
</dbReference>
<dbReference type="EnsemblPlants" id="TraesWEE_scaffold_1290268_01G000100.1">
    <property type="protein sequence ID" value="TraesWEE_scaffold_1290268_01G000100.1"/>
    <property type="gene ID" value="TraesWEE_scaffold_1290268_01G000100"/>
</dbReference>
<dbReference type="GeneID" id="803164"/>
<dbReference type="Gramene" id="TraesARI2A03G00780880.1">
    <property type="protein sequence ID" value="TraesARI2A03G00780880.1.CDS1"/>
    <property type="gene ID" value="TraesARI2A03G00780880"/>
</dbReference>
<dbReference type="Gramene" id="TraesARIUn03G04718370.1">
    <property type="protein sequence ID" value="TraesARIUn03G04718370.1.CDS1"/>
    <property type="gene ID" value="TraesARIUn03G04718370"/>
</dbReference>
<dbReference type="Gramene" id="TraesARIUn03G04721400.1">
    <property type="protein sequence ID" value="TraesARIUn03G04721400.1.CDS1"/>
    <property type="gene ID" value="TraesARIUn03G04721400"/>
</dbReference>
<dbReference type="Gramene" id="TraesARIUn03G04723960.1">
    <property type="protein sequence ID" value="TraesARIUn03G04723960.1.CDS1"/>
    <property type="gene ID" value="TraesARIUn03G04723960"/>
</dbReference>
<dbReference type="Gramene" id="TraesARIUn03G04730880.1">
    <property type="protein sequence ID" value="TraesARIUn03G04730880.1.CDS1"/>
    <property type="gene ID" value="TraesARIUn03G04730880"/>
</dbReference>
<dbReference type="Gramene" id="TraesARIUn03G04730950.1">
    <property type="protein sequence ID" value="TraesARIUn03G04730950.1.CDS1"/>
    <property type="gene ID" value="TraesARIUn03G04730950"/>
</dbReference>
<dbReference type="Gramene" id="TraesARIUn03G04732690.1">
    <property type="protein sequence ID" value="TraesARIUn03G04732690.1.CDS1"/>
    <property type="gene ID" value="TraesARIUn03G04732690"/>
</dbReference>
<dbReference type="Gramene" id="TraesARIUn03G04734720.1">
    <property type="protein sequence ID" value="TraesARIUn03G04734720.1.CDS1"/>
    <property type="gene ID" value="TraesARIUn03G04734720"/>
</dbReference>
<dbReference type="Gramene" id="TraesCS5D03G1229900.1">
    <property type="protein sequence ID" value="TraesCS5D03G1229900.1.CDS1"/>
    <property type="gene ID" value="TraesCS5D03G1229900"/>
</dbReference>
<dbReference type="Gramene" id="TraesCSU02G269100.1">
    <property type="protein sequence ID" value="TraesCSU02G269100.1.cds1"/>
    <property type="gene ID" value="TraesCSU02G269100"/>
</dbReference>
<dbReference type="Gramene" id="TraesCSU03G0538600.1">
    <property type="protein sequence ID" value="TraesCSU03G0538600.1.CDS1"/>
    <property type="gene ID" value="TraesCSU03G0538600"/>
</dbReference>
<dbReference type="Gramene" id="TraesJAG7B03G04250220.1">
    <property type="protein sequence ID" value="TraesJAG7B03G04250220.1.CDS1"/>
    <property type="gene ID" value="TraesJAG7B03G04250220"/>
</dbReference>
<dbReference type="Gramene" id="TraesKAR4B01G0208980.1">
    <property type="protein sequence ID" value="cds.TraesKAR4B01G0208980.1"/>
    <property type="gene ID" value="TraesKAR4B01G0208980"/>
</dbReference>
<dbReference type="Gramene" id="TraesKAR6B01G0219380.1">
    <property type="protein sequence ID" value="cds.TraesKAR6B01G0219380.1"/>
    <property type="gene ID" value="TraesKAR6B01G0219380"/>
</dbReference>
<dbReference type="Gramene" id="TraesKAR6B01G0220160.1">
    <property type="protein sequence ID" value="cds.TraesKAR6B01G0220160.1"/>
    <property type="gene ID" value="TraesKAR6B01G0220160"/>
</dbReference>
<dbReference type="Gramene" id="TraesKARUn01G0028520.1">
    <property type="protein sequence ID" value="cds.TraesKARUn01G0028520.1"/>
    <property type="gene ID" value="TraesKARUn01G0028520"/>
</dbReference>
<dbReference type="Gramene" id="TraesKARUn01G0030090.1">
    <property type="protein sequence ID" value="cds.TraesKARUn01G0030090.1"/>
    <property type="gene ID" value="TraesKARUn01G0030090"/>
</dbReference>
<dbReference type="Gramene" id="TraesKARUn01G0066650.1">
    <property type="protein sequence ID" value="cds.TraesKARUn01G0066650.1"/>
    <property type="gene ID" value="TraesKARUn01G0066650"/>
</dbReference>
<dbReference type="Gramene" id="TraesKARUn01G0071160.1">
    <property type="protein sequence ID" value="cds.TraesKARUn01G0071160.1"/>
    <property type="gene ID" value="TraesKARUn01G0071160"/>
</dbReference>
<dbReference type="Gramene" id="TraesKARUn01G0071380.1">
    <property type="protein sequence ID" value="cds.TraesKARUn01G0071380.1"/>
    <property type="gene ID" value="TraesKARUn01G0071380"/>
</dbReference>
<dbReference type="Gramene" id="TraesKARUn01G0082260.1">
    <property type="protein sequence ID" value="cds.TraesKARUn01G0082260.1"/>
    <property type="gene ID" value="TraesKARUn01G0082260"/>
</dbReference>
<dbReference type="Gramene" id="TraesKARUn01G0082290.1">
    <property type="protein sequence ID" value="cds.TraesKARUn01G0082290.1"/>
    <property type="gene ID" value="TraesKARUn01G0082290"/>
</dbReference>
<dbReference type="Gramene" id="TraesKARUn01G0082440.1">
    <property type="protein sequence ID" value="cds.TraesKARUn01G0082440.1"/>
    <property type="gene ID" value="TraesKARUn01G0082440"/>
</dbReference>
<dbReference type="Gramene" id="TraesKARUn01G0086010.1">
    <property type="protein sequence ID" value="cds.TraesKARUn01G0086010.1"/>
    <property type="gene ID" value="TraesKARUn01G0086010"/>
</dbReference>
<dbReference type="Gramene" id="TraesKARUn01G0090890.1">
    <property type="protein sequence ID" value="cds.TraesKARUn01G0090890.1"/>
    <property type="gene ID" value="TraesKARUn01G0090890"/>
</dbReference>
<dbReference type="Gramene" id="TraesKARUn01G0091510.1">
    <property type="protein sequence ID" value="cds.TraesKARUn01G0091510.1"/>
    <property type="gene ID" value="TraesKARUn01G0091510"/>
</dbReference>
<dbReference type="Gramene" id="TraesKARUn01G0092050.1">
    <property type="protein sequence ID" value="cds.TraesKARUn01G0092050.1"/>
    <property type="gene ID" value="TraesKARUn01G0092050"/>
</dbReference>
<dbReference type="Gramene" id="TraesKARUn01G0092190.1">
    <property type="protein sequence ID" value="cds.TraesKARUn01G0092190.1"/>
    <property type="gene ID" value="TraesKARUn01G0092190"/>
</dbReference>
<dbReference type="Gramene" id="TraesKARUn01G0092240.1">
    <property type="protein sequence ID" value="cds.TraesKARUn01G0092240.1"/>
    <property type="gene ID" value="TraesKARUn01G0092240"/>
</dbReference>
<dbReference type="Gramene" id="TraesKARUn01G0092740.1">
    <property type="protein sequence ID" value="cds.TraesKARUn01G0092740.1"/>
    <property type="gene ID" value="TraesKARUn01G0092740"/>
</dbReference>
<dbReference type="Gramene" id="TraesKARUn01G0092980.1">
    <property type="protein sequence ID" value="cds.TraesKARUn01G0092980.1"/>
    <property type="gene ID" value="TraesKARUn01G0092980"/>
</dbReference>
<dbReference type="Gramene" id="TraesKARUn01G0127090.1">
    <property type="protein sequence ID" value="cds.TraesKARUn01G0127090.1"/>
    <property type="gene ID" value="TraesKARUn01G0127090"/>
</dbReference>
<dbReference type="Gramene" id="TraesKARUn01G0127420.1">
    <property type="protein sequence ID" value="cds.TraesKARUn01G0127420.1"/>
    <property type="gene ID" value="TraesKARUn01G0127420"/>
</dbReference>
<dbReference type="Gramene" id="TraesKARUn01G0127500.1">
    <property type="protein sequence ID" value="cds.TraesKARUn01G0127500.1"/>
    <property type="gene ID" value="TraesKARUn01G0127500"/>
</dbReference>
<dbReference type="Gramene" id="TraesKARUn01G0138270.1">
    <property type="protein sequence ID" value="cds.TraesKARUn01G0138270.1"/>
    <property type="gene ID" value="TraesKARUn01G0138270"/>
</dbReference>
<dbReference type="Gramene" id="TraesKARUn01G0140340.1">
    <property type="protein sequence ID" value="cds.TraesKARUn01G0140340.1"/>
    <property type="gene ID" value="TraesKARUn01G0140340"/>
</dbReference>
<dbReference type="Gramene" id="TraesKARUn01G0160390.1">
    <property type="protein sequence ID" value="cds.TraesKARUn01G0160390.1"/>
    <property type="gene ID" value="TraesKARUn01G0160390"/>
</dbReference>
<dbReference type="Gramene" id="TraesKARUn01G0178620.1">
    <property type="protein sequence ID" value="cds.TraesKARUn01G0178620.1"/>
    <property type="gene ID" value="TraesKARUn01G0178620"/>
</dbReference>
<dbReference type="Gramene" id="TraesKARUn01G0184460.1">
    <property type="protein sequence ID" value="cds.TraesKARUn01G0184460.1"/>
    <property type="gene ID" value="TraesKARUn01G0184460"/>
</dbReference>
<dbReference type="Gramene" id="TraesKARUn01G0186480.1">
    <property type="protein sequence ID" value="cds.TraesKARUn01G0186480.1"/>
    <property type="gene ID" value="TraesKARUn01G0186480"/>
</dbReference>
<dbReference type="Gramene" id="TraesLAC3B03G01549730.1">
    <property type="protein sequence ID" value="TraesLAC3B03G01549730.1.CDS1"/>
    <property type="gene ID" value="TraesLAC3B03G01549730"/>
</dbReference>
<dbReference type="Gramene" id="TraesLDM3B03G01608350.1">
    <property type="protein sequence ID" value="TraesLDM3B03G01608350.1.CDS1"/>
    <property type="gene ID" value="TraesLDM3B03G01608350"/>
</dbReference>
<dbReference type="Gramene" id="TraesNOR7B03G04316250.1">
    <property type="protein sequence ID" value="TraesNOR7B03G04316250.1.CDS1"/>
    <property type="gene ID" value="TraesNOR7B03G04316250"/>
</dbReference>
<dbReference type="Gramene" id="TraesNORUn03G04570620.1">
    <property type="protein sequence ID" value="TraesNORUn03G04570620.1.CDS1"/>
    <property type="gene ID" value="TraesNORUn03G04570620"/>
</dbReference>
<dbReference type="Gramene" id="TraesPARA_EIv1.0_2680750.1">
    <property type="protein sequence ID" value="TraesPARA_EIv1.0_2680750.1.CDS1"/>
    <property type="gene ID" value="TraesPARA_EIv1.0_2680750"/>
</dbReference>
<dbReference type="Gramene" id="TraesPARA_EIv1.0_2682000.1">
    <property type="protein sequence ID" value="TraesPARA_EIv1.0_2682000.1.CDS1"/>
    <property type="gene ID" value="TraesPARA_EIv1.0_2682000"/>
</dbReference>
<dbReference type="Gramene" id="TraesRN1A0100363600.1">
    <property type="protein sequence ID" value="TraesRN1A0100363600.1"/>
    <property type="gene ID" value="TraesRN1A0100363600"/>
</dbReference>
<dbReference type="Gramene" id="TraesRN1A0100363700.1">
    <property type="protein sequence ID" value="TraesRN1A0100363700.1"/>
    <property type="gene ID" value="TraesRN1A0100363700"/>
</dbReference>
<dbReference type="Gramene" id="TraesRN1A0100363800.1">
    <property type="protein sequence ID" value="TraesRN1A0100363800.1"/>
    <property type="gene ID" value="TraesRN1A0100363800"/>
</dbReference>
<dbReference type="Gramene" id="TraesRN3B0100439100.1">
    <property type="protein sequence ID" value="TraesRN3B0100439100.1"/>
    <property type="gene ID" value="TraesRN3B0100439100"/>
</dbReference>
<dbReference type="Gramene" id="TraesRN3D0100058700.1">
    <property type="protein sequence ID" value="TraesRN3D0100058700.1"/>
    <property type="gene ID" value="TraesRN3D0100058700"/>
</dbReference>
<dbReference type="Gramene" id="TraesRN4D0100078600.1">
    <property type="protein sequence ID" value="TraesRN4D0100078600.1"/>
    <property type="gene ID" value="TraesRN4D0100078600"/>
</dbReference>
<dbReference type="Gramene" id="TraesRN7D0100633100.1">
    <property type="protein sequence ID" value="TraesRN7D0100633100.1"/>
    <property type="gene ID" value="TraesRN7D0100633100"/>
</dbReference>
<dbReference type="Gramene" id="TraesSYM2A03G00780580.1">
    <property type="protein sequence ID" value="TraesSYM2A03G00780580.1.CDS1"/>
    <property type="gene ID" value="TraesSYM2A03G00780580"/>
</dbReference>
<dbReference type="Gramene" id="TraesWEE_scaffold_1290268_01G000100.1">
    <property type="protein sequence ID" value="TraesWEE_scaffold_1290268_01G000100.1"/>
    <property type="gene ID" value="TraesWEE_scaffold_1290268_01G000100"/>
</dbReference>
<dbReference type="KEGG" id="taes:803164"/>
<dbReference type="eggNOG" id="ENOG502S8Y7">
    <property type="taxonomic scope" value="Eukaryota"/>
</dbReference>
<dbReference type="HOGENOM" id="CLU_190203_1_0_1"/>
<dbReference type="OrthoDB" id="564838at2759"/>
<dbReference type="Proteomes" id="UP000019116">
    <property type="component" value="Chloroplast"/>
</dbReference>
<dbReference type="GO" id="GO:0009535">
    <property type="term" value="C:chloroplast thylakoid membrane"/>
    <property type="evidence" value="ECO:0007669"/>
    <property type="project" value="UniProtKB-SubCell"/>
</dbReference>
<dbReference type="GO" id="GO:0009523">
    <property type="term" value="C:photosystem II"/>
    <property type="evidence" value="ECO:0007669"/>
    <property type="project" value="UniProtKB-KW"/>
</dbReference>
<dbReference type="GO" id="GO:0042301">
    <property type="term" value="F:phosphate ion binding"/>
    <property type="evidence" value="ECO:0007669"/>
    <property type="project" value="InterPro"/>
</dbReference>
<dbReference type="GO" id="GO:0015979">
    <property type="term" value="P:photosynthesis"/>
    <property type="evidence" value="ECO:0007669"/>
    <property type="project" value="UniProtKB-UniRule"/>
</dbReference>
<dbReference type="GO" id="GO:0050821">
    <property type="term" value="P:protein stabilization"/>
    <property type="evidence" value="ECO:0007669"/>
    <property type="project" value="InterPro"/>
</dbReference>
<dbReference type="FunFam" id="1.20.5.880:FF:000001">
    <property type="entry name" value="Photosystem II reaction center protein H"/>
    <property type="match status" value="1"/>
</dbReference>
<dbReference type="Gene3D" id="1.20.5.880">
    <property type="entry name" value="Photosystem II reaction center protein H"/>
    <property type="match status" value="1"/>
</dbReference>
<dbReference type="HAMAP" id="MF_00752">
    <property type="entry name" value="PSII_PsbH"/>
    <property type="match status" value="1"/>
</dbReference>
<dbReference type="InterPro" id="IPR001056">
    <property type="entry name" value="PSII_PsbH"/>
</dbReference>
<dbReference type="InterPro" id="IPR036863">
    <property type="entry name" value="PSII_PsbH_sf"/>
</dbReference>
<dbReference type="NCBIfam" id="NF002728">
    <property type="entry name" value="PRK02624.1"/>
    <property type="match status" value="1"/>
</dbReference>
<dbReference type="PANTHER" id="PTHR34469">
    <property type="entry name" value="PHOTOSYSTEM II REACTION CENTER PROTEIN H"/>
    <property type="match status" value="1"/>
</dbReference>
<dbReference type="PANTHER" id="PTHR34469:SF4">
    <property type="entry name" value="PHOTOSYSTEM II REACTION CENTER PROTEIN H"/>
    <property type="match status" value="1"/>
</dbReference>
<dbReference type="Pfam" id="PF00737">
    <property type="entry name" value="PsbH"/>
    <property type="match status" value="1"/>
</dbReference>
<dbReference type="SUPFAM" id="SSF161025">
    <property type="entry name" value="Photosystem II 10 kDa phosphoprotein PsbH"/>
    <property type="match status" value="1"/>
</dbReference>
<comment type="function">
    <text evidence="1">One of the components of the core complex of photosystem II (PSII), required for its stability and/or assembly. PSII is a light-driven water:plastoquinone oxidoreductase that uses light energy to abstract electrons from H(2)O, generating O(2) and a proton gradient subsequently used for ATP formation. It consists of a core antenna complex that captures photons, and an electron transfer chain that converts photonic excitation into a charge separation.</text>
</comment>
<comment type="subunit">
    <text evidence="1 3">PSII is composed of 1 copy each of membrane proteins PsbA, PsbB, PsbC, PsbD, PsbE, PsbF, PsbH, PsbI, PsbJ, PsbK, PsbL, PsbM, PsbT, PsbX, PsbY, PsbZ, Psb30/Ycf12, at least 3 peripheral proteins of the oxygen-evolving complex and a large number of cofactors. It forms dimeric complexes.</text>
</comment>
<comment type="subcellular location">
    <subcellularLocation>
        <location evidence="1 3">Plastid</location>
        <location evidence="1 3">Chloroplast thylakoid membrane</location>
        <topology evidence="1">Single-pass membrane protein</topology>
    </subcellularLocation>
</comment>
<comment type="PTM">
    <text evidence="1">Phosphorylation is a light-dependent reaction catalyzed by a membrane-bound kinase; phosphorylation occurs on Thr residue(s) in the N-terminus of the protein.</text>
</comment>
<comment type="similarity">
    <text evidence="1">Belongs to the PsbH family.</text>
</comment>
<proteinExistence type="evidence at protein level"/>
<feature type="initiator methionine" description="Removed" evidence="3 4">
    <location>
        <position position="1"/>
    </location>
</feature>
<feature type="chain" id="PRO_0000070539" description="Photosystem II reaction center protein H">
    <location>
        <begin position="2"/>
        <end position="73"/>
    </location>
</feature>
<feature type="transmembrane region" description="Helical" evidence="1">
    <location>
        <begin position="41"/>
        <end position="61"/>
    </location>
</feature>
<feature type="region of interest" description="Disordered" evidence="2">
    <location>
        <begin position="1"/>
        <end position="23"/>
    </location>
</feature>
<feature type="modified residue" description="Phosphothreonine" evidence="1">
    <location>
        <position position="3"/>
    </location>
</feature>
<feature type="modified residue" description="Phosphothreonine" evidence="1">
    <location>
        <position position="5"/>
    </location>
</feature>
<feature type="sequence conflict" description="In Ref. 4; BAB47062." evidence="6" ref="4">
    <original>R</original>
    <variation>Q</variation>
    <location>
        <position position="16"/>
    </location>
</feature>
<geneLocation type="chloroplast"/>
<protein>
    <recommendedName>
        <fullName evidence="1">Photosystem II reaction center protein H</fullName>
        <shortName evidence="1">PSII-H</shortName>
    </recommendedName>
    <alternativeName>
        <fullName evidence="1 5">Photosystem II 10 kDa phosphoprotein</fullName>
    </alternativeName>
</protein>
<sequence length="73" mass="7787">MATQTVEDSSKPRPKRTGAGSLLKPLNSEYGKVAPGWGTTPFMGVAMALFAIFLSIILEIYNSSVLLDGILTN</sequence>
<accession>P69555</accession>
<accession>P04965</accession>
<accession>P09448</accession>
<name>PSBH_WHEAT</name>
<organism>
    <name type="scientific">Triticum aestivum</name>
    <name type="common">Wheat</name>
    <dbReference type="NCBI Taxonomy" id="4565"/>
    <lineage>
        <taxon>Eukaryota</taxon>
        <taxon>Viridiplantae</taxon>
        <taxon>Streptophyta</taxon>
        <taxon>Embryophyta</taxon>
        <taxon>Tracheophyta</taxon>
        <taxon>Spermatophyta</taxon>
        <taxon>Magnoliopsida</taxon>
        <taxon>Liliopsida</taxon>
        <taxon>Poales</taxon>
        <taxon>Poaceae</taxon>
        <taxon>BOP clade</taxon>
        <taxon>Pooideae</taxon>
        <taxon>Triticodae</taxon>
        <taxon>Triticeae</taxon>
        <taxon>Triticinae</taxon>
        <taxon>Triticum</taxon>
    </lineage>
</organism>
<reference key="1">
    <citation type="journal article" date="1986" name="FEBS Lett.">
        <title>The gene for the 10 kDa phosphoprotein of photosystem II is located in chloroplast DNA.</title>
        <authorList>
            <person name="Hird S.M."/>
            <person name="Dyer T.A."/>
            <person name="Gray J.C."/>
        </authorList>
    </citation>
    <scope>NUCLEOTIDE SEQUENCE [GENOMIC DNA]</scope>
</reference>
<reference key="2">
    <citation type="journal article" date="1989" name="Plant Mol. Biol.">
        <title>A photosystem II polypeptide is encoded by an open reading frame co-transcribed with genes for cytochrome b-559 in wheat chloroplast DNA.</title>
        <authorList>
            <person name="Webber A.N."/>
            <person name="Hird S.M."/>
            <person name="Packman L.C."/>
            <person name="Dyer T.A."/>
            <person name="Gray J.C."/>
        </authorList>
    </citation>
    <scope>NUCLEOTIDE SEQUENCE [GENOMIC DNA]</scope>
    <scope>PROTEIN SEQUENCE OF 2-22</scope>
    <source>
        <strain>cv. Sentry</strain>
        <tissue>Leaf</tissue>
    </source>
</reference>
<reference key="3">
    <citation type="journal article" date="1991" name="Curr. Genet.">
        <title>Differential expression of the psbB and psbH genes encoding the 47 kDa chlorophyll a-protein and the 10 kDa phosphoprotein of photosystem II during chloroplast development in wheat.</title>
        <authorList>
            <person name="Hird S.M."/>
            <person name="Webber A.N."/>
            <person name="Wilson R.J."/>
            <person name="Dyer T.A."/>
            <person name="Gray J.C."/>
        </authorList>
    </citation>
    <scope>NUCLEOTIDE SEQUENCE [GENOMIC DNA]</scope>
    <source>
        <strain>cv. Mardler</strain>
    </source>
</reference>
<reference key="4">
    <citation type="journal article" date="2000" name="Plant Mol. Biol. Rep.">
        <title>Chinese spring wheat (Triticum aestivum L.) chloroplast genome: complete sequence and contig clones.</title>
        <authorList>
            <person name="Ogihara Y."/>
            <person name="Isono K."/>
            <person name="Kojima T."/>
            <person name="Endo A."/>
            <person name="Hanaoka M."/>
            <person name="Shiina T."/>
            <person name="Terachi T."/>
            <person name="Utsugi S."/>
            <person name="Murata M."/>
            <person name="Mori N."/>
            <person name="Takumi S."/>
            <person name="Ikeo K."/>
            <person name="Gojobori T."/>
            <person name="Murai R."/>
            <person name="Murai K."/>
            <person name="Matsuoka Y."/>
            <person name="Ohnishi Y."/>
            <person name="Tajiri H."/>
            <person name="Tsunewaki K."/>
        </authorList>
    </citation>
    <scope>NUCLEOTIDE SEQUENCE [LARGE SCALE GENOMIC DNA]</scope>
    <source>
        <strain>cv. Chinese Spring</strain>
    </source>
</reference>
<reference key="5">
    <citation type="journal article" date="1989" name="FEBS Lett.">
        <title>N-terminal sequencing of photosystem II low-molecular-mass proteins. 5 and 4.1 kDa components of the O2-evolving core complex from higher plants.</title>
        <authorList>
            <person name="Ikeuchi M."/>
            <person name="Takio K."/>
            <person name="Inoue Y."/>
        </authorList>
    </citation>
    <scope>PROTEIN SEQUENCE OF 2-11</scope>
    <scope>SUBUNIT</scope>
    <scope>SUBCELLULAR LOCATION</scope>
</reference>
<gene>
    <name evidence="1" type="primary">psbH</name>
</gene>
<evidence type="ECO:0000255" key="1">
    <source>
        <dbReference type="HAMAP-Rule" id="MF_00752"/>
    </source>
</evidence>
<evidence type="ECO:0000256" key="2">
    <source>
        <dbReference type="SAM" id="MobiDB-lite"/>
    </source>
</evidence>
<evidence type="ECO:0000269" key="3">
    <source>
    </source>
</evidence>
<evidence type="ECO:0000269" key="4">
    <source ref="2"/>
</evidence>
<evidence type="ECO:0000303" key="5">
    <source ref="1"/>
</evidence>
<evidence type="ECO:0000305" key="6"/>
<keyword id="KW-0150">Chloroplast</keyword>
<keyword id="KW-0903">Direct protein sequencing</keyword>
<keyword id="KW-0472">Membrane</keyword>
<keyword id="KW-0597">Phosphoprotein</keyword>
<keyword id="KW-0602">Photosynthesis</keyword>
<keyword id="KW-0604">Photosystem II</keyword>
<keyword id="KW-0934">Plastid</keyword>
<keyword id="KW-1185">Reference proteome</keyword>
<keyword id="KW-0793">Thylakoid</keyword>
<keyword id="KW-0812">Transmembrane</keyword>
<keyword id="KW-1133">Transmembrane helix</keyword>